<keyword id="KW-0050">Antiport</keyword>
<keyword id="KW-0997">Cell inner membrane</keyword>
<keyword id="KW-1003">Cell membrane</keyword>
<keyword id="KW-0406">Ion transport</keyword>
<keyword id="KW-0472">Membrane</keyword>
<keyword id="KW-0915">Sodium</keyword>
<keyword id="KW-0739">Sodium transport</keyword>
<keyword id="KW-0812">Transmembrane</keyword>
<keyword id="KW-1133">Transmembrane helix</keyword>
<keyword id="KW-0813">Transport</keyword>
<gene>
    <name evidence="1" type="primary">nhaA</name>
    <name type="ordered locus">YPK_3592</name>
</gene>
<reference key="1">
    <citation type="submission" date="2008-02" db="EMBL/GenBank/DDBJ databases">
        <title>Complete sequence of Yersinia pseudotuberculosis YPIII.</title>
        <authorList>
            <consortium name="US DOE Joint Genome Institute"/>
            <person name="Copeland A."/>
            <person name="Lucas S."/>
            <person name="Lapidus A."/>
            <person name="Glavina del Rio T."/>
            <person name="Dalin E."/>
            <person name="Tice H."/>
            <person name="Bruce D."/>
            <person name="Goodwin L."/>
            <person name="Pitluck S."/>
            <person name="Munk A.C."/>
            <person name="Brettin T."/>
            <person name="Detter J.C."/>
            <person name="Han C."/>
            <person name="Tapia R."/>
            <person name="Schmutz J."/>
            <person name="Larimer F."/>
            <person name="Land M."/>
            <person name="Hauser L."/>
            <person name="Challacombe J.F."/>
            <person name="Green L."/>
            <person name="Lindler L.E."/>
            <person name="Nikolich M.P."/>
            <person name="Richardson P."/>
        </authorList>
    </citation>
    <scope>NUCLEOTIDE SEQUENCE [LARGE SCALE GENOMIC DNA]</scope>
    <source>
        <strain>YPIII</strain>
    </source>
</reference>
<comment type="function">
    <text evidence="1">Na(+)/H(+) antiporter that extrudes sodium in exchange for external protons.</text>
</comment>
<comment type="catalytic activity">
    <reaction evidence="1">
        <text>Na(+)(in) + 2 H(+)(out) = Na(+)(out) + 2 H(+)(in)</text>
        <dbReference type="Rhea" id="RHEA:29251"/>
        <dbReference type="ChEBI" id="CHEBI:15378"/>
        <dbReference type="ChEBI" id="CHEBI:29101"/>
    </reaction>
    <physiologicalReaction direction="left-to-right" evidence="1">
        <dbReference type="Rhea" id="RHEA:29252"/>
    </physiologicalReaction>
</comment>
<comment type="subcellular location">
    <subcellularLocation>
        <location evidence="1">Cell inner membrane</location>
        <topology evidence="1">Multi-pass membrane protein</topology>
    </subcellularLocation>
</comment>
<comment type="similarity">
    <text evidence="1">Belongs to the NhaA Na(+)/H(+) (TC 2.A.33) antiporter family.</text>
</comment>
<name>NHAA_YERPY</name>
<feature type="chain" id="PRO_1000188446" description="Na(+)/H(+) antiporter NhaA">
    <location>
        <begin position="1"/>
        <end position="394"/>
    </location>
</feature>
<feature type="transmembrane region" description="Helical" evidence="1">
    <location>
        <begin position="14"/>
        <end position="34"/>
    </location>
</feature>
<feature type="transmembrane region" description="Helical" evidence="1">
    <location>
        <begin position="59"/>
        <end position="79"/>
    </location>
</feature>
<feature type="transmembrane region" description="Helical" evidence="1">
    <location>
        <begin position="95"/>
        <end position="115"/>
    </location>
</feature>
<feature type="transmembrane region" description="Helical" evidence="1">
    <location>
        <begin position="125"/>
        <end position="145"/>
    </location>
</feature>
<feature type="transmembrane region" description="Helical" evidence="1">
    <location>
        <begin position="154"/>
        <end position="174"/>
    </location>
</feature>
<feature type="transmembrane region" description="Helical" evidence="1">
    <location>
        <begin position="179"/>
        <end position="199"/>
    </location>
</feature>
<feature type="transmembrane region" description="Helical" evidence="1">
    <location>
        <begin position="213"/>
        <end position="233"/>
    </location>
</feature>
<feature type="transmembrane region" description="Helical" evidence="1">
    <location>
        <begin position="254"/>
        <end position="274"/>
    </location>
</feature>
<feature type="transmembrane region" description="Helical" evidence="1">
    <location>
        <begin position="292"/>
        <end position="312"/>
    </location>
</feature>
<feature type="transmembrane region" description="Helical" evidence="1">
    <location>
        <begin position="328"/>
        <end position="348"/>
    </location>
</feature>
<feature type="transmembrane region" description="Helical" evidence="1">
    <location>
        <begin position="363"/>
        <end position="383"/>
    </location>
</feature>
<accession>B1JL02</accession>
<sequence>MTNIIRQFLRQEAAGGLILIIAAAIALLMANSALQGVYQSFLDIPVSIKIASLDISKPLLLWINDGLMAVFFLMVGLEVKRELMEGSLAGRDKAVFPAIAALGGMLAPALIYLLFNGADEVTRQGWAIPAATDIAFALGVMALLGNRVPTGLKVFLLALAIIDDLGVIIIIALFYTQQVSLQSLGIAAAAIALLAYMNWRGVGKTSAYLLVGLVLWVCILKSGVHATLAGVIVGFMIPLHTQDQRSPSESLEHGLHPWVAYLILPLFAFANAGVSLQGVSLSGLTSLLPMGIATGLFIGKPLGIFTFSWLAVKLGIAKLPDAINFKQIFAVSVLCGIGFTMSIFIASLAFEGTDIALTTYSKLGILLGSTTAAVVGYSLLRLVLPARRKAVNVR</sequence>
<dbReference type="EMBL" id="CP000950">
    <property type="protein sequence ID" value="ACA69859.1"/>
    <property type="molecule type" value="Genomic_DNA"/>
</dbReference>
<dbReference type="RefSeq" id="WP_011191700.1">
    <property type="nucleotide sequence ID" value="NZ_CP009792.1"/>
</dbReference>
<dbReference type="SMR" id="B1JL02"/>
<dbReference type="GeneID" id="49787385"/>
<dbReference type="KEGG" id="ypy:YPK_3592"/>
<dbReference type="PATRIC" id="fig|502800.11.peg.4340"/>
<dbReference type="GO" id="GO:0005886">
    <property type="term" value="C:plasma membrane"/>
    <property type="evidence" value="ECO:0007669"/>
    <property type="project" value="UniProtKB-SubCell"/>
</dbReference>
<dbReference type="GO" id="GO:0015385">
    <property type="term" value="F:sodium:proton antiporter activity"/>
    <property type="evidence" value="ECO:0007669"/>
    <property type="project" value="TreeGrafter"/>
</dbReference>
<dbReference type="GO" id="GO:0006885">
    <property type="term" value="P:regulation of pH"/>
    <property type="evidence" value="ECO:0007669"/>
    <property type="project" value="InterPro"/>
</dbReference>
<dbReference type="Gene3D" id="1.20.1530.10">
    <property type="entry name" value="Na+/H+ antiporter like domain"/>
    <property type="match status" value="1"/>
</dbReference>
<dbReference type="HAMAP" id="MF_01844">
    <property type="entry name" value="NhaA"/>
    <property type="match status" value="1"/>
</dbReference>
<dbReference type="InterPro" id="IPR023171">
    <property type="entry name" value="Na/H_antiporter_dom_sf"/>
</dbReference>
<dbReference type="InterPro" id="IPR004670">
    <property type="entry name" value="NhaA"/>
</dbReference>
<dbReference type="NCBIfam" id="TIGR00773">
    <property type="entry name" value="NhaA"/>
    <property type="match status" value="1"/>
</dbReference>
<dbReference type="NCBIfam" id="NF007111">
    <property type="entry name" value="PRK09560.1"/>
    <property type="match status" value="1"/>
</dbReference>
<dbReference type="NCBIfam" id="NF007112">
    <property type="entry name" value="PRK09561.1"/>
    <property type="match status" value="1"/>
</dbReference>
<dbReference type="PANTHER" id="PTHR30341:SF0">
    <property type="entry name" value="NA(+)_H(+) ANTIPORTER NHAA"/>
    <property type="match status" value="1"/>
</dbReference>
<dbReference type="PANTHER" id="PTHR30341">
    <property type="entry name" value="SODIUM ION/PROTON ANTIPORTER NHAA-RELATED"/>
    <property type="match status" value="1"/>
</dbReference>
<dbReference type="Pfam" id="PF06965">
    <property type="entry name" value="Na_H_antiport_1"/>
    <property type="match status" value="1"/>
</dbReference>
<protein>
    <recommendedName>
        <fullName evidence="1">Na(+)/H(+) antiporter NhaA</fullName>
    </recommendedName>
    <alternativeName>
        <fullName evidence="1">Sodium/proton antiporter NhaA</fullName>
    </alternativeName>
</protein>
<organism>
    <name type="scientific">Yersinia pseudotuberculosis serotype O:3 (strain YPIII)</name>
    <dbReference type="NCBI Taxonomy" id="502800"/>
    <lineage>
        <taxon>Bacteria</taxon>
        <taxon>Pseudomonadati</taxon>
        <taxon>Pseudomonadota</taxon>
        <taxon>Gammaproteobacteria</taxon>
        <taxon>Enterobacterales</taxon>
        <taxon>Yersiniaceae</taxon>
        <taxon>Yersinia</taxon>
    </lineage>
</organism>
<proteinExistence type="inferred from homology"/>
<evidence type="ECO:0000255" key="1">
    <source>
        <dbReference type="HAMAP-Rule" id="MF_01844"/>
    </source>
</evidence>